<proteinExistence type="inferred from homology"/>
<organism>
    <name type="scientific">Haemophilus influenzae (strain PittGG)</name>
    <dbReference type="NCBI Taxonomy" id="374931"/>
    <lineage>
        <taxon>Bacteria</taxon>
        <taxon>Pseudomonadati</taxon>
        <taxon>Pseudomonadota</taxon>
        <taxon>Gammaproteobacteria</taxon>
        <taxon>Pasteurellales</taxon>
        <taxon>Pasteurellaceae</taxon>
        <taxon>Haemophilus</taxon>
    </lineage>
</organism>
<reference key="1">
    <citation type="journal article" date="2007" name="Genome Biol.">
        <title>Characterization and modeling of the Haemophilus influenzae core and supragenomes based on the complete genomic sequences of Rd and 12 clinical nontypeable strains.</title>
        <authorList>
            <person name="Hogg J.S."/>
            <person name="Hu F.Z."/>
            <person name="Janto B."/>
            <person name="Boissy R."/>
            <person name="Hayes J."/>
            <person name="Keefe R."/>
            <person name="Post J.C."/>
            <person name="Ehrlich G.D."/>
        </authorList>
    </citation>
    <scope>NUCLEOTIDE SEQUENCE [LARGE SCALE GENOMIC DNA]</scope>
    <source>
        <strain>PittGG</strain>
    </source>
</reference>
<gene>
    <name evidence="1" type="primary">hldE</name>
    <name type="ordered locus">CGSHiGG_00330</name>
</gene>
<sequence length="476" mass="51873">MAQYSAEFKQAKVLVLGDVMLDRYWFGATNRISPEAPVPVVRVQENEERAGGAANVAMNIASLNVPVQLMGLIGQDETGSALSLLLEKQKIDCNFVALETHPTITKLRILSRHQQLLRLDFEEDFNNVDCKDLLAKLESAVKNYGALILSDYGKGTLKDVQKMIQIARKANVPVLIDPKGTDFERYCGATLLTPNMSEFEAVVGKCNTEEEIIKKGLKLISDIELTALLVTRSEKGMTLLRPNQEPYHLPTVAKEVFDVTGAGDTVISVLATALADGRSFEESCYLANVAAGIVVGKLGTSTVSTVELENAIHARPETGFGIMSEAELKDAVAQAKARGEKIVMTNGCFDILHPGHISYLENARKLGDRLIVAVNSDDSVKRLKGESRPINNLENRMAVLAGLASVDWLVPFTEDTPQHLIGEILPDLLVKGGDYKPEEIAGSKEVWANGGDVKVLNFENGCSTTNVIEKIKLLKD</sequence>
<accession>A5UEH8</accession>
<comment type="function">
    <text evidence="1">Catalyzes the phosphorylation of D-glycero-D-manno-heptose 7-phosphate at the C-1 position to selectively form D-glycero-beta-D-manno-heptose-1,7-bisphosphate.</text>
</comment>
<comment type="function">
    <text evidence="1">Catalyzes the ADP transfer from ATP to D-glycero-beta-D-manno-heptose 1-phosphate, yielding ADP-D-glycero-beta-D-manno-heptose.</text>
</comment>
<comment type="catalytic activity">
    <reaction evidence="1">
        <text>D-glycero-beta-D-manno-heptose 7-phosphate + ATP = D-glycero-beta-D-manno-heptose 1,7-bisphosphate + ADP + H(+)</text>
        <dbReference type="Rhea" id="RHEA:27473"/>
        <dbReference type="ChEBI" id="CHEBI:15378"/>
        <dbReference type="ChEBI" id="CHEBI:30616"/>
        <dbReference type="ChEBI" id="CHEBI:60204"/>
        <dbReference type="ChEBI" id="CHEBI:60208"/>
        <dbReference type="ChEBI" id="CHEBI:456216"/>
        <dbReference type="EC" id="2.7.1.167"/>
    </reaction>
</comment>
<comment type="catalytic activity">
    <reaction evidence="1">
        <text>D-glycero-beta-D-manno-heptose 1-phosphate + ATP + H(+) = ADP-D-glycero-beta-D-manno-heptose + diphosphate</text>
        <dbReference type="Rhea" id="RHEA:27465"/>
        <dbReference type="ChEBI" id="CHEBI:15378"/>
        <dbReference type="ChEBI" id="CHEBI:30616"/>
        <dbReference type="ChEBI" id="CHEBI:33019"/>
        <dbReference type="ChEBI" id="CHEBI:59967"/>
        <dbReference type="ChEBI" id="CHEBI:61593"/>
        <dbReference type="EC" id="2.7.7.70"/>
    </reaction>
</comment>
<comment type="pathway">
    <text evidence="1">Nucleotide-sugar biosynthesis; ADP-L-glycero-beta-D-manno-heptose biosynthesis; ADP-L-glycero-beta-D-manno-heptose from D-glycero-beta-D-manno-heptose 7-phosphate: step 1/4.</text>
</comment>
<comment type="pathway">
    <text evidence="1">Nucleotide-sugar biosynthesis; ADP-L-glycero-beta-D-manno-heptose biosynthesis; ADP-L-glycero-beta-D-manno-heptose from D-glycero-beta-D-manno-heptose 7-phosphate: step 3/4.</text>
</comment>
<comment type="subunit">
    <text evidence="1">Homodimer.</text>
</comment>
<comment type="similarity">
    <text evidence="1">In the N-terminal section; belongs to the carbohydrate kinase PfkB family.</text>
</comment>
<comment type="similarity">
    <text evidence="1">In the C-terminal section; belongs to the cytidylyltransferase family.</text>
</comment>
<dbReference type="EC" id="2.7.1.167" evidence="1"/>
<dbReference type="EC" id="2.7.7.70" evidence="1"/>
<dbReference type="EMBL" id="CP000672">
    <property type="protein sequence ID" value="ABQ99183.1"/>
    <property type="molecule type" value="Genomic_DNA"/>
</dbReference>
<dbReference type="SMR" id="A5UEH8"/>
<dbReference type="KEGG" id="hiq:CGSHiGG_00330"/>
<dbReference type="HOGENOM" id="CLU_021150_2_1_6"/>
<dbReference type="UniPathway" id="UPA00356">
    <property type="reaction ID" value="UER00437"/>
</dbReference>
<dbReference type="UniPathway" id="UPA00356">
    <property type="reaction ID" value="UER00439"/>
</dbReference>
<dbReference type="Proteomes" id="UP000001990">
    <property type="component" value="Chromosome"/>
</dbReference>
<dbReference type="GO" id="GO:0005829">
    <property type="term" value="C:cytosol"/>
    <property type="evidence" value="ECO:0007669"/>
    <property type="project" value="TreeGrafter"/>
</dbReference>
<dbReference type="GO" id="GO:0005524">
    <property type="term" value="F:ATP binding"/>
    <property type="evidence" value="ECO:0007669"/>
    <property type="project" value="UniProtKB-UniRule"/>
</dbReference>
<dbReference type="GO" id="GO:0033785">
    <property type="term" value="F:heptose 7-phosphate kinase activity"/>
    <property type="evidence" value="ECO:0007669"/>
    <property type="project" value="UniProtKB-UniRule"/>
</dbReference>
<dbReference type="GO" id="GO:0033786">
    <property type="term" value="F:heptose-1-phosphate adenylyltransferase activity"/>
    <property type="evidence" value="ECO:0007669"/>
    <property type="project" value="UniProtKB-UniRule"/>
</dbReference>
<dbReference type="GO" id="GO:0016773">
    <property type="term" value="F:phosphotransferase activity, alcohol group as acceptor"/>
    <property type="evidence" value="ECO:0007669"/>
    <property type="project" value="InterPro"/>
</dbReference>
<dbReference type="GO" id="GO:0097171">
    <property type="term" value="P:ADP-L-glycero-beta-D-manno-heptose biosynthetic process"/>
    <property type="evidence" value="ECO:0007669"/>
    <property type="project" value="UniProtKB-UniPathway"/>
</dbReference>
<dbReference type="CDD" id="cd01172">
    <property type="entry name" value="RfaE_like"/>
    <property type="match status" value="1"/>
</dbReference>
<dbReference type="FunFam" id="3.40.1190.20:FF:000002">
    <property type="entry name" value="Bifunctional protein HldE"/>
    <property type="match status" value="1"/>
</dbReference>
<dbReference type="FunFam" id="3.40.50.620:FF:000028">
    <property type="entry name" value="Bifunctional protein HldE"/>
    <property type="match status" value="1"/>
</dbReference>
<dbReference type="Gene3D" id="3.40.1190.20">
    <property type="match status" value="1"/>
</dbReference>
<dbReference type="Gene3D" id="3.40.50.620">
    <property type="entry name" value="HUPs"/>
    <property type="match status" value="1"/>
</dbReference>
<dbReference type="HAMAP" id="MF_01603">
    <property type="entry name" value="HldE"/>
    <property type="match status" value="1"/>
</dbReference>
<dbReference type="InterPro" id="IPR023030">
    <property type="entry name" value="Bifunc_HldE"/>
</dbReference>
<dbReference type="InterPro" id="IPR004821">
    <property type="entry name" value="Cyt_trans-like"/>
</dbReference>
<dbReference type="InterPro" id="IPR011611">
    <property type="entry name" value="PfkB_dom"/>
</dbReference>
<dbReference type="InterPro" id="IPR011913">
    <property type="entry name" value="RfaE_dom_I"/>
</dbReference>
<dbReference type="InterPro" id="IPR011914">
    <property type="entry name" value="RfaE_dom_II"/>
</dbReference>
<dbReference type="InterPro" id="IPR029056">
    <property type="entry name" value="Ribokinase-like"/>
</dbReference>
<dbReference type="InterPro" id="IPR014729">
    <property type="entry name" value="Rossmann-like_a/b/a_fold"/>
</dbReference>
<dbReference type="NCBIfam" id="TIGR00125">
    <property type="entry name" value="cyt_tran_rel"/>
    <property type="match status" value="1"/>
</dbReference>
<dbReference type="NCBIfam" id="NF008454">
    <property type="entry name" value="PRK11316.1"/>
    <property type="match status" value="1"/>
</dbReference>
<dbReference type="NCBIfam" id="TIGR02198">
    <property type="entry name" value="rfaE_dom_I"/>
    <property type="match status" value="1"/>
</dbReference>
<dbReference type="NCBIfam" id="TIGR02199">
    <property type="entry name" value="rfaE_dom_II"/>
    <property type="match status" value="1"/>
</dbReference>
<dbReference type="PANTHER" id="PTHR46969">
    <property type="entry name" value="BIFUNCTIONAL PROTEIN HLDE"/>
    <property type="match status" value="1"/>
</dbReference>
<dbReference type="PANTHER" id="PTHR46969:SF1">
    <property type="entry name" value="BIFUNCTIONAL PROTEIN HLDE"/>
    <property type="match status" value="1"/>
</dbReference>
<dbReference type="Pfam" id="PF01467">
    <property type="entry name" value="CTP_transf_like"/>
    <property type="match status" value="1"/>
</dbReference>
<dbReference type="Pfam" id="PF00294">
    <property type="entry name" value="PfkB"/>
    <property type="match status" value="1"/>
</dbReference>
<dbReference type="SUPFAM" id="SSF52374">
    <property type="entry name" value="Nucleotidylyl transferase"/>
    <property type="match status" value="1"/>
</dbReference>
<dbReference type="SUPFAM" id="SSF53613">
    <property type="entry name" value="Ribokinase-like"/>
    <property type="match status" value="1"/>
</dbReference>
<protein>
    <recommendedName>
        <fullName evidence="1">Bifunctional protein HldE</fullName>
    </recommendedName>
    <domain>
        <recommendedName>
            <fullName evidence="1">D-beta-D-heptose 7-phosphate kinase</fullName>
            <ecNumber evidence="1">2.7.1.167</ecNumber>
        </recommendedName>
        <alternativeName>
            <fullName evidence="1">D-beta-D-heptose 7-phosphotransferase</fullName>
        </alternativeName>
        <alternativeName>
            <fullName evidence="1">D-glycero-beta-D-manno-heptose-7-phosphate kinase</fullName>
        </alternativeName>
    </domain>
    <domain>
        <recommendedName>
            <fullName evidence="1">D-beta-D-heptose 1-phosphate adenylyltransferase</fullName>
            <ecNumber evidence="1">2.7.7.70</ecNumber>
        </recommendedName>
        <alternativeName>
            <fullName evidence="1">D-glycero-beta-D-manno-heptose 1-phosphate adenylyltransferase</fullName>
        </alternativeName>
    </domain>
</protein>
<feature type="chain" id="PRO_0000323491" description="Bifunctional protein HldE">
    <location>
        <begin position="1"/>
        <end position="476"/>
    </location>
</feature>
<feature type="region of interest" description="Ribokinase">
    <location>
        <begin position="1"/>
        <end position="318"/>
    </location>
</feature>
<feature type="region of interest" description="Cytidylyltransferase">
    <location>
        <begin position="344"/>
        <end position="476"/>
    </location>
</feature>
<feature type="active site" evidence="1">
    <location>
        <position position="264"/>
    </location>
</feature>
<feature type="binding site" evidence="1">
    <location>
        <begin position="195"/>
        <end position="198"/>
    </location>
    <ligand>
        <name>ATP</name>
        <dbReference type="ChEBI" id="CHEBI:30616"/>
    </ligand>
</feature>
<keyword id="KW-0067">ATP-binding</keyword>
<keyword id="KW-0119">Carbohydrate metabolism</keyword>
<keyword id="KW-0418">Kinase</keyword>
<keyword id="KW-0511">Multifunctional enzyme</keyword>
<keyword id="KW-0547">Nucleotide-binding</keyword>
<keyword id="KW-0548">Nucleotidyltransferase</keyword>
<keyword id="KW-0808">Transferase</keyword>
<name>HLDE_HAEIG</name>
<evidence type="ECO:0000255" key="1">
    <source>
        <dbReference type="HAMAP-Rule" id="MF_01603"/>
    </source>
</evidence>